<reference key="1">
    <citation type="journal article" date="2004" name="J. Bacteriol.">
        <title>The genome sequence of Mycoplasma hyopneumoniae strain 232, the agent of swine mycoplasmosis.</title>
        <authorList>
            <person name="Minion F.C."/>
            <person name="Lefkowitz E.J."/>
            <person name="Madsen M.L."/>
            <person name="Cleary B.J."/>
            <person name="Swartzell S.M."/>
            <person name="Mahairas G.G."/>
        </authorList>
    </citation>
    <scope>NUCLEOTIDE SEQUENCE [LARGE SCALE GENOMIC DNA]</scope>
    <source>
        <strain>232</strain>
    </source>
</reference>
<protein>
    <recommendedName>
        <fullName evidence="1">FMN-dependent NADH:quinone oxidoreductase</fullName>
        <ecNumber evidence="1">1.6.5.-</ecNumber>
    </recommendedName>
    <alternativeName>
        <fullName evidence="1">Azo-dye reductase</fullName>
    </alternativeName>
    <alternativeName>
        <fullName evidence="1">FMN-dependent NADH-azo compound oxidoreductase</fullName>
    </alternativeName>
    <alternativeName>
        <fullName evidence="1">FMN-dependent NADH-azoreductase</fullName>
        <ecNumber evidence="1">1.7.1.17</ecNumber>
    </alternativeName>
</protein>
<feature type="chain" id="PRO_0000245933" description="FMN-dependent NADH:quinone oxidoreductase">
    <location>
        <begin position="1"/>
        <end position="201"/>
    </location>
</feature>
<feature type="binding site" evidence="1">
    <location>
        <position position="9"/>
    </location>
    <ligand>
        <name>FMN</name>
        <dbReference type="ChEBI" id="CHEBI:58210"/>
    </ligand>
</feature>
<feature type="binding site" evidence="1">
    <location>
        <begin position="16"/>
        <end position="18"/>
    </location>
    <ligand>
        <name>FMN</name>
        <dbReference type="ChEBI" id="CHEBI:58210"/>
    </ligand>
</feature>
<comment type="function">
    <text evidence="1">Quinone reductase that provides resistance to thiol-specific stress caused by electrophilic quinones.</text>
</comment>
<comment type="function">
    <text evidence="1">Also exhibits azoreductase activity. Catalyzes the reductive cleavage of the azo bond in aromatic azo compounds to the corresponding amines.</text>
</comment>
<comment type="catalytic activity">
    <reaction evidence="1">
        <text>2 a quinone + NADH + H(+) = 2 a 1,4-benzosemiquinone + NAD(+)</text>
        <dbReference type="Rhea" id="RHEA:65952"/>
        <dbReference type="ChEBI" id="CHEBI:15378"/>
        <dbReference type="ChEBI" id="CHEBI:57540"/>
        <dbReference type="ChEBI" id="CHEBI:57945"/>
        <dbReference type="ChEBI" id="CHEBI:132124"/>
        <dbReference type="ChEBI" id="CHEBI:134225"/>
    </reaction>
</comment>
<comment type="catalytic activity">
    <reaction evidence="1">
        <text>N,N-dimethyl-1,4-phenylenediamine + anthranilate + 2 NAD(+) = 2-(4-dimethylaminophenyl)diazenylbenzoate + 2 NADH + 2 H(+)</text>
        <dbReference type="Rhea" id="RHEA:55872"/>
        <dbReference type="ChEBI" id="CHEBI:15378"/>
        <dbReference type="ChEBI" id="CHEBI:15783"/>
        <dbReference type="ChEBI" id="CHEBI:16567"/>
        <dbReference type="ChEBI" id="CHEBI:57540"/>
        <dbReference type="ChEBI" id="CHEBI:57945"/>
        <dbReference type="ChEBI" id="CHEBI:71579"/>
        <dbReference type="EC" id="1.7.1.17"/>
    </reaction>
</comment>
<comment type="cofactor">
    <cofactor evidence="1">
        <name>FMN</name>
        <dbReference type="ChEBI" id="CHEBI:58210"/>
    </cofactor>
    <text evidence="1">Binds 1 FMN per subunit.</text>
</comment>
<comment type="subunit">
    <text evidence="1">Homodimer.</text>
</comment>
<comment type="similarity">
    <text evidence="1">Belongs to the azoreductase type 1 family.</text>
</comment>
<comment type="sequence caution" evidence="2">
    <conflict type="erroneous initiation">
        <sequence resource="EMBL-CDS" id="AAV27579"/>
    </conflict>
</comment>
<organism>
    <name type="scientific">Mesomycoplasma hyopneumoniae (strain 232)</name>
    <name type="common">Mycoplasma hyopneumoniae</name>
    <dbReference type="NCBI Taxonomy" id="295358"/>
    <lineage>
        <taxon>Bacteria</taxon>
        <taxon>Bacillati</taxon>
        <taxon>Mycoplasmatota</taxon>
        <taxon>Mycoplasmoidales</taxon>
        <taxon>Metamycoplasmataceae</taxon>
        <taxon>Mesomycoplasma</taxon>
    </lineage>
</organism>
<dbReference type="EC" id="1.6.5.-" evidence="1"/>
<dbReference type="EC" id="1.7.1.17" evidence="1"/>
<dbReference type="EMBL" id="AE017332">
    <property type="protein sequence ID" value="AAV27579.1"/>
    <property type="status" value="ALT_INIT"/>
    <property type="molecule type" value="Genomic_DNA"/>
</dbReference>
<dbReference type="RefSeq" id="WP_044284799.1">
    <property type="nucleotide sequence ID" value="NC_006360.1"/>
</dbReference>
<dbReference type="SMR" id="Q600K1"/>
<dbReference type="KEGG" id="mhy:mhp454"/>
<dbReference type="eggNOG" id="COG1182">
    <property type="taxonomic scope" value="Bacteria"/>
</dbReference>
<dbReference type="HOGENOM" id="CLU_088964_2_0_14"/>
<dbReference type="Proteomes" id="UP000006822">
    <property type="component" value="Chromosome"/>
</dbReference>
<dbReference type="GO" id="GO:0009055">
    <property type="term" value="F:electron transfer activity"/>
    <property type="evidence" value="ECO:0007669"/>
    <property type="project" value="UniProtKB-UniRule"/>
</dbReference>
<dbReference type="GO" id="GO:0010181">
    <property type="term" value="F:FMN binding"/>
    <property type="evidence" value="ECO:0007669"/>
    <property type="project" value="UniProtKB-UniRule"/>
</dbReference>
<dbReference type="GO" id="GO:0016652">
    <property type="term" value="F:oxidoreductase activity, acting on NAD(P)H as acceptor"/>
    <property type="evidence" value="ECO:0007669"/>
    <property type="project" value="UniProtKB-UniRule"/>
</dbReference>
<dbReference type="GO" id="GO:0016655">
    <property type="term" value="F:oxidoreductase activity, acting on NAD(P)H, quinone or similar compound as acceptor"/>
    <property type="evidence" value="ECO:0007669"/>
    <property type="project" value="InterPro"/>
</dbReference>
<dbReference type="Gene3D" id="3.40.50.360">
    <property type="match status" value="1"/>
</dbReference>
<dbReference type="HAMAP" id="MF_01216">
    <property type="entry name" value="Azoreductase_type1"/>
    <property type="match status" value="1"/>
</dbReference>
<dbReference type="InterPro" id="IPR003680">
    <property type="entry name" value="Flavodoxin_fold"/>
</dbReference>
<dbReference type="InterPro" id="IPR029039">
    <property type="entry name" value="Flavoprotein-like_sf"/>
</dbReference>
<dbReference type="InterPro" id="IPR050104">
    <property type="entry name" value="FMN-dep_NADH:Q_OxRdtase_AzoR1"/>
</dbReference>
<dbReference type="InterPro" id="IPR023048">
    <property type="entry name" value="NADH:quinone_OxRdtase_FMN_depd"/>
</dbReference>
<dbReference type="NCBIfam" id="NF002370">
    <property type="entry name" value="PRK01355.1"/>
    <property type="match status" value="1"/>
</dbReference>
<dbReference type="PANTHER" id="PTHR43741">
    <property type="entry name" value="FMN-DEPENDENT NADH-AZOREDUCTASE 1"/>
    <property type="match status" value="1"/>
</dbReference>
<dbReference type="PANTHER" id="PTHR43741:SF4">
    <property type="entry name" value="FMN-DEPENDENT NADH:QUINONE OXIDOREDUCTASE"/>
    <property type="match status" value="1"/>
</dbReference>
<dbReference type="Pfam" id="PF02525">
    <property type="entry name" value="Flavodoxin_2"/>
    <property type="match status" value="1"/>
</dbReference>
<dbReference type="SUPFAM" id="SSF52218">
    <property type="entry name" value="Flavoproteins"/>
    <property type="match status" value="1"/>
</dbReference>
<sequence length="201" mass="22982">MNILVIKSSVNEKKGSYSSHLSDLFIKFYLEIHPEDQIEVYDLNQFGLANTNLTIKNFEDKTFYQKAESDFWINKLRKADKIVFSTSMTNFNYSATTKNFFDAITVPNKTFLLDKNTGKYTGLLKNIQNVQILTAQGAPLGWYPFGNHSALIKQIFEFLGAKVRSDFFVLDGTKVAPNNQKPIADFVAQRQNQIKILAENF</sequence>
<keyword id="KW-0285">Flavoprotein</keyword>
<keyword id="KW-0288">FMN</keyword>
<keyword id="KW-0520">NAD</keyword>
<keyword id="KW-0560">Oxidoreductase</keyword>
<accession>Q600K1</accession>
<evidence type="ECO:0000255" key="1">
    <source>
        <dbReference type="HAMAP-Rule" id="MF_01216"/>
    </source>
</evidence>
<evidence type="ECO:0000305" key="2"/>
<gene>
    <name evidence="1" type="primary">azoR</name>
    <name type="ordered locus">mhp454</name>
</gene>
<proteinExistence type="inferred from homology"/>
<name>AZOR_MESH2</name>